<dbReference type="EC" id="3.5.99.6" evidence="1"/>
<dbReference type="EMBL" id="CP000728">
    <property type="protein sequence ID" value="ABS40107.1"/>
    <property type="molecule type" value="Genomic_DNA"/>
</dbReference>
<dbReference type="RefSeq" id="WP_003400051.1">
    <property type="nucleotide sequence ID" value="NC_009699.1"/>
</dbReference>
<dbReference type="SMR" id="A7GH51"/>
<dbReference type="KEGG" id="cbf:CLI_2883"/>
<dbReference type="HOGENOM" id="CLU_049611_1_1_9"/>
<dbReference type="UniPathway" id="UPA00629">
    <property type="reaction ID" value="UER00684"/>
</dbReference>
<dbReference type="Proteomes" id="UP000002410">
    <property type="component" value="Chromosome"/>
</dbReference>
<dbReference type="GO" id="GO:0005737">
    <property type="term" value="C:cytoplasm"/>
    <property type="evidence" value="ECO:0007669"/>
    <property type="project" value="TreeGrafter"/>
</dbReference>
<dbReference type="GO" id="GO:0004342">
    <property type="term" value="F:glucosamine-6-phosphate deaminase activity"/>
    <property type="evidence" value="ECO:0007669"/>
    <property type="project" value="UniProtKB-UniRule"/>
</dbReference>
<dbReference type="GO" id="GO:0042802">
    <property type="term" value="F:identical protein binding"/>
    <property type="evidence" value="ECO:0007669"/>
    <property type="project" value="TreeGrafter"/>
</dbReference>
<dbReference type="GO" id="GO:0005975">
    <property type="term" value="P:carbohydrate metabolic process"/>
    <property type="evidence" value="ECO:0007669"/>
    <property type="project" value="InterPro"/>
</dbReference>
<dbReference type="GO" id="GO:0006043">
    <property type="term" value="P:glucosamine catabolic process"/>
    <property type="evidence" value="ECO:0007669"/>
    <property type="project" value="TreeGrafter"/>
</dbReference>
<dbReference type="GO" id="GO:0006046">
    <property type="term" value="P:N-acetylglucosamine catabolic process"/>
    <property type="evidence" value="ECO:0007669"/>
    <property type="project" value="TreeGrafter"/>
</dbReference>
<dbReference type="GO" id="GO:0019262">
    <property type="term" value="P:N-acetylneuraminate catabolic process"/>
    <property type="evidence" value="ECO:0007669"/>
    <property type="project" value="UniProtKB-UniRule"/>
</dbReference>
<dbReference type="CDD" id="cd01399">
    <property type="entry name" value="GlcN6P_deaminase"/>
    <property type="match status" value="1"/>
</dbReference>
<dbReference type="FunFam" id="3.40.50.1360:FF:000003">
    <property type="entry name" value="Glucosamine-6-phosphate deaminase"/>
    <property type="match status" value="1"/>
</dbReference>
<dbReference type="Gene3D" id="3.40.50.1360">
    <property type="match status" value="1"/>
</dbReference>
<dbReference type="HAMAP" id="MF_01241">
    <property type="entry name" value="GlcN6P_deamin"/>
    <property type="match status" value="1"/>
</dbReference>
<dbReference type="InterPro" id="IPR006148">
    <property type="entry name" value="Glc/Gal-6P_isomerase"/>
</dbReference>
<dbReference type="InterPro" id="IPR004547">
    <property type="entry name" value="Glucosamine6P_isomerase"/>
</dbReference>
<dbReference type="InterPro" id="IPR018321">
    <property type="entry name" value="Glucosamine6P_isomerase_CS"/>
</dbReference>
<dbReference type="InterPro" id="IPR037171">
    <property type="entry name" value="NagB/RpiA_transferase-like"/>
</dbReference>
<dbReference type="NCBIfam" id="TIGR00502">
    <property type="entry name" value="nagB"/>
    <property type="match status" value="1"/>
</dbReference>
<dbReference type="NCBIfam" id="NF001684">
    <property type="entry name" value="PRK00443.1-4"/>
    <property type="match status" value="1"/>
</dbReference>
<dbReference type="PANTHER" id="PTHR11280">
    <property type="entry name" value="GLUCOSAMINE-6-PHOSPHATE ISOMERASE"/>
    <property type="match status" value="1"/>
</dbReference>
<dbReference type="PANTHER" id="PTHR11280:SF5">
    <property type="entry name" value="GLUCOSAMINE-6-PHOSPHATE ISOMERASE"/>
    <property type="match status" value="1"/>
</dbReference>
<dbReference type="Pfam" id="PF01182">
    <property type="entry name" value="Glucosamine_iso"/>
    <property type="match status" value="1"/>
</dbReference>
<dbReference type="SUPFAM" id="SSF100950">
    <property type="entry name" value="NagB/RpiA/CoA transferase-like"/>
    <property type="match status" value="1"/>
</dbReference>
<dbReference type="PROSITE" id="PS01161">
    <property type="entry name" value="GLC_GALNAC_ISOMERASE"/>
    <property type="match status" value="1"/>
</dbReference>
<sequence>MRIIVVDNYEEMSKKAAAMIASQVILKPDSVLGLATGDTPIGMYKEIINIYKNEKMNFSKVKTFNLDEYYGLNRENPQSYYYYMMNNLFNHVNIDKNNINIPNGMADNIEVECKEYERKIDKAGGIDLQILGIGVNGHIGFNEPNISFESETHLVNLNEKTIESNSRFFSSKEEVPTKAISMGIKSIIHSKKIILLACGSAKSDAVSKAINGKINPNIPASILQLHRDVVVIIDKEAASKLKLK</sequence>
<organism>
    <name type="scientific">Clostridium botulinum (strain Langeland / NCTC 10281 / Type F)</name>
    <dbReference type="NCBI Taxonomy" id="441772"/>
    <lineage>
        <taxon>Bacteria</taxon>
        <taxon>Bacillati</taxon>
        <taxon>Bacillota</taxon>
        <taxon>Clostridia</taxon>
        <taxon>Eubacteriales</taxon>
        <taxon>Clostridiaceae</taxon>
        <taxon>Clostridium</taxon>
    </lineage>
</organism>
<keyword id="KW-0119">Carbohydrate metabolism</keyword>
<keyword id="KW-0378">Hydrolase</keyword>
<evidence type="ECO:0000255" key="1">
    <source>
        <dbReference type="HAMAP-Rule" id="MF_01241"/>
    </source>
</evidence>
<reference key="1">
    <citation type="submission" date="2007-06" db="EMBL/GenBank/DDBJ databases">
        <authorList>
            <person name="Brinkac L.M."/>
            <person name="Daugherty S."/>
            <person name="Dodson R.J."/>
            <person name="Madupu R."/>
            <person name="Brown J.L."/>
            <person name="Bruce D."/>
            <person name="Detter C."/>
            <person name="Munk C."/>
            <person name="Smith L.A."/>
            <person name="Smith T.J."/>
            <person name="White O."/>
            <person name="Brettin T.S."/>
        </authorList>
    </citation>
    <scope>NUCLEOTIDE SEQUENCE [LARGE SCALE GENOMIC DNA]</scope>
    <source>
        <strain>Langeland / NCTC 10281 / Type F</strain>
    </source>
</reference>
<name>NAGB_CLOBL</name>
<accession>A7GH51</accession>
<gene>
    <name evidence="1" type="primary">nagB</name>
    <name type="ordered locus">CLI_2883</name>
</gene>
<comment type="function">
    <text evidence="1">Catalyzes the reversible isomerization-deamination of glucosamine 6-phosphate (GlcN6P) to form fructose 6-phosphate (Fru6P) and ammonium ion.</text>
</comment>
<comment type="catalytic activity">
    <reaction evidence="1">
        <text>alpha-D-glucosamine 6-phosphate + H2O = beta-D-fructose 6-phosphate + NH4(+)</text>
        <dbReference type="Rhea" id="RHEA:12172"/>
        <dbReference type="ChEBI" id="CHEBI:15377"/>
        <dbReference type="ChEBI" id="CHEBI:28938"/>
        <dbReference type="ChEBI" id="CHEBI:57634"/>
        <dbReference type="ChEBI" id="CHEBI:75989"/>
        <dbReference type="EC" id="3.5.99.6"/>
    </reaction>
</comment>
<comment type="pathway">
    <text evidence="1">Amino-sugar metabolism; N-acetylneuraminate degradation; D-fructose 6-phosphate from N-acetylneuraminate: step 5/5.</text>
</comment>
<comment type="similarity">
    <text evidence="1">Belongs to the glucosamine/galactosamine-6-phosphate isomerase family. NagB subfamily.</text>
</comment>
<feature type="chain" id="PRO_1000066969" description="Glucosamine-6-phosphate deaminase">
    <location>
        <begin position="1"/>
        <end position="244"/>
    </location>
</feature>
<feature type="active site" description="Proton acceptor; for enolization step" evidence="1">
    <location>
        <position position="67"/>
    </location>
</feature>
<feature type="active site" description="For ring-opening step" evidence="1">
    <location>
        <position position="136"/>
    </location>
</feature>
<feature type="active site" description="Proton acceptor; for ring-opening step" evidence="1">
    <location>
        <position position="138"/>
    </location>
</feature>
<feature type="active site" description="For ring-opening step" evidence="1">
    <location>
        <position position="143"/>
    </location>
</feature>
<proteinExistence type="inferred from homology"/>
<protein>
    <recommendedName>
        <fullName evidence="1">Glucosamine-6-phosphate deaminase</fullName>
        <ecNumber evidence="1">3.5.99.6</ecNumber>
    </recommendedName>
    <alternativeName>
        <fullName evidence="1">GlcN6P deaminase</fullName>
        <shortName evidence="1">GNPDA</shortName>
    </alternativeName>
    <alternativeName>
        <fullName evidence="1">Glucosamine-6-phosphate isomerase</fullName>
    </alternativeName>
</protein>